<accession>B4TBG7</accession>
<dbReference type="EC" id="3.5.1.n3" evidence="1"/>
<dbReference type="EMBL" id="CP001120">
    <property type="protein sequence ID" value="ACF68763.1"/>
    <property type="molecule type" value="Genomic_DNA"/>
</dbReference>
<dbReference type="RefSeq" id="WP_000169764.1">
    <property type="nucleotide sequence ID" value="NC_011083.1"/>
</dbReference>
<dbReference type="SMR" id="B4TBG7"/>
<dbReference type="KEGG" id="seh:SeHA_C2540"/>
<dbReference type="HOGENOM" id="CLU_084199_0_0_6"/>
<dbReference type="UniPathway" id="UPA00030"/>
<dbReference type="UniPathway" id="UPA00036">
    <property type="reaction ID" value="UER00496"/>
</dbReference>
<dbReference type="Proteomes" id="UP000001866">
    <property type="component" value="Chromosome"/>
</dbReference>
<dbReference type="GO" id="GO:0016020">
    <property type="term" value="C:membrane"/>
    <property type="evidence" value="ECO:0007669"/>
    <property type="project" value="GOC"/>
</dbReference>
<dbReference type="GO" id="GO:0016811">
    <property type="term" value="F:hydrolase activity, acting on carbon-nitrogen (but not peptide) bonds, in linear amides"/>
    <property type="evidence" value="ECO:0007669"/>
    <property type="project" value="UniProtKB-UniRule"/>
</dbReference>
<dbReference type="GO" id="GO:0036108">
    <property type="term" value="P:4-amino-4-deoxy-alpha-L-arabinopyranosyl undecaprenyl phosphate biosynthetic process"/>
    <property type="evidence" value="ECO:0007669"/>
    <property type="project" value="UniProtKB-UniRule"/>
</dbReference>
<dbReference type="GO" id="GO:0009245">
    <property type="term" value="P:lipid A biosynthetic process"/>
    <property type="evidence" value="ECO:0007669"/>
    <property type="project" value="UniProtKB-UniRule"/>
</dbReference>
<dbReference type="GO" id="GO:0009103">
    <property type="term" value="P:lipopolysaccharide biosynthetic process"/>
    <property type="evidence" value="ECO:0007669"/>
    <property type="project" value="UniProtKB-UniRule"/>
</dbReference>
<dbReference type="GO" id="GO:0046677">
    <property type="term" value="P:response to antibiotic"/>
    <property type="evidence" value="ECO:0007669"/>
    <property type="project" value="UniProtKB-KW"/>
</dbReference>
<dbReference type="Gene3D" id="3.20.20.370">
    <property type="entry name" value="Glycoside hydrolase/deacetylase"/>
    <property type="match status" value="1"/>
</dbReference>
<dbReference type="HAMAP" id="MF_01870">
    <property type="entry name" value="ArnD"/>
    <property type="match status" value="1"/>
</dbReference>
<dbReference type="InterPro" id="IPR023557">
    <property type="entry name" value="ArnD"/>
</dbReference>
<dbReference type="InterPro" id="IPR011330">
    <property type="entry name" value="Glyco_hydro/deAcase_b/a-brl"/>
</dbReference>
<dbReference type="InterPro" id="IPR002509">
    <property type="entry name" value="NODB_dom"/>
</dbReference>
<dbReference type="InterPro" id="IPR050248">
    <property type="entry name" value="Polysacc_deacetylase_ArnD"/>
</dbReference>
<dbReference type="NCBIfam" id="NF011923">
    <property type="entry name" value="PRK15394.1"/>
    <property type="match status" value="1"/>
</dbReference>
<dbReference type="PANTHER" id="PTHR10587:SF137">
    <property type="entry name" value="4-DEOXY-4-FORMAMIDO-L-ARABINOSE-PHOSPHOUNDECAPRENOL DEFORMYLASE ARND-RELATED"/>
    <property type="match status" value="1"/>
</dbReference>
<dbReference type="PANTHER" id="PTHR10587">
    <property type="entry name" value="GLYCOSYL TRANSFERASE-RELATED"/>
    <property type="match status" value="1"/>
</dbReference>
<dbReference type="Pfam" id="PF01522">
    <property type="entry name" value="Polysacc_deac_1"/>
    <property type="match status" value="1"/>
</dbReference>
<dbReference type="SUPFAM" id="SSF88713">
    <property type="entry name" value="Glycoside hydrolase/deacetylase"/>
    <property type="match status" value="1"/>
</dbReference>
<dbReference type="PROSITE" id="PS51677">
    <property type="entry name" value="NODB"/>
    <property type="match status" value="1"/>
</dbReference>
<feature type="chain" id="PRO_0000383532" description="Probable 4-deoxy-4-formamido-L-arabinose-phosphoundecaprenol deformylase ArnD">
    <location>
        <begin position="1"/>
        <end position="299"/>
    </location>
</feature>
<feature type="domain" description="NodB homology" evidence="1">
    <location>
        <begin position="2"/>
        <end position="260"/>
    </location>
</feature>
<keyword id="KW-0046">Antibiotic resistance</keyword>
<keyword id="KW-0378">Hydrolase</keyword>
<keyword id="KW-0441">Lipid A biosynthesis</keyword>
<keyword id="KW-0444">Lipid biosynthesis</keyword>
<keyword id="KW-0443">Lipid metabolism</keyword>
<keyword id="KW-0448">Lipopolysaccharide biosynthesis</keyword>
<reference key="1">
    <citation type="journal article" date="2011" name="J. Bacteriol.">
        <title>Comparative genomics of 28 Salmonella enterica isolates: evidence for CRISPR-mediated adaptive sublineage evolution.</title>
        <authorList>
            <person name="Fricke W.F."/>
            <person name="Mammel M.K."/>
            <person name="McDermott P.F."/>
            <person name="Tartera C."/>
            <person name="White D.G."/>
            <person name="Leclerc J.E."/>
            <person name="Ravel J."/>
            <person name="Cebula T.A."/>
        </authorList>
    </citation>
    <scope>NUCLEOTIDE SEQUENCE [LARGE SCALE GENOMIC DNA]</scope>
    <source>
        <strain>SL476</strain>
    </source>
</reference>
<comment type="function">
    <text evidence="1">Catalyzes the deformylation of 4-deoxy-4-formamido-L-arabinose-phosphoundecaprenol to 4-amino-4-deoxy-L-arabinose-phosphoundecaprenol. The modified arabinose is attached to lipid A and is required for resistance to polymyxin and cationic antimicrobial peptides.</text>
</comment>
<comment type="catalytic activity">
    <reaction evidence="1">
        <text>4-deoxy-4-formamido-alpha-L-arabinopyranosyl di-trans,octa-cis-undecaprenyl phosphate + H2O = 4-amino-4-deoxy-alpha-L-arabinopyranosyl di-trans,octa-cis-undecaprenyl phosphate + formate</text>
        <dbReference type="Rhea" id="RHEA:27734"/>
        <dbReference type="ChEBI" id="CHEBI:15377"/>
        <dbReference type="ChEBI" id="CHEBI:15740"/>
        <dbReference type="ChEBI" id="CHEBI:58909"/>
        <dbReference type="ChEBI" id="CHEBI:60463"/>
        <dbReference type="EC" id="3.5.1.n3"/>
    </reaction>
</comment>
<comment type="pathway">
    <text evidence="1">Glycolipid biosynthesis; 4-amino-4-deoxy-alpha-L-arabinose undecaprenyl phosphate biosynthesis; 4-amino-4-deoxy-alpha-L-arabinose undecaprenyl phosphate from UDP-4-deoxy-4-formamido-beta-L-arabinose and undecaprenyl phosphate: step 2/2.</text>
</comment>
<comment type="pathway">
    <text evidence="1">Bacterial outer membrane biogenesis; lipopolysaccharide biosynthesis.</text>
</comment>
<comment type="similarity">
    <text evidence="1">Belongs to the polysaccharide deacetylase family. ArnD deformylase subfamily.</text>
</comment>
<name>ARND_SALHS</name>
<proteinExistence type="inferred from homology"/>
<evidence type="ECO:0000255" key="1">
    <source>
        <dbReference type="HAMAP-Rule" id="MF_01870"/>
    </source>
</evidence>
<sequence>MTKVGLRIDVDTLRGTREGVPRLLATLHRHGVQASFFFSVGPDNMGRHLWRLIRPRFLWKMLRSNAASLYGWDILLAGTAWPGKNIGNANAGIIRETATYHETGLHAWDHHAWQTHSGHWSIRQLEEDIARGITALEAIIGKPVTCSAAAGWRADGRVVRAKEPFNLRYNSDCRGTTLFRPLLMPDQTGTPQIPVTLPTWDEVIGPAVQAQSFNTWIISRMLQDKGTPVYTIHAEVEGIVHQPLFEDLLVRARDAGITFCPLGELLPTSPESLPLGQIVRGHIPGREGWLGCQQAASAS</sequence>
<organism>
    <name type="scientific">Salmonella heidelberg (strain SL476)</name>
    <dbReference type="NCBI Taxonomy" id="454169"/>
    <lineage>
        <taxon>Bacteria</taxon>
        <taxon>Pseudomonadati</taxon>
        <taxon>Pseudomonadota</taxon>
        <taxon>Gammaproteobacteria</taxon>
        <taxon>Enterobacterales</taxon>
        <taxon>Enterobacteriaceae</taxon>
        <taxon>Salmonella</taxon>
    </lineage>
</organism>
<protein>
    <recommendedName>
        <fullName evidence="1">Probable 4-deoxy-4-formamido-L-arabinose-phosphoundecaprenol deformylase ArnD</fullName>
        <ecNumber evidence="1">3.5.1.n3</ecNumber>
    </recommendedName>
</protein>
<gene>
    <name evidence="1" type="primary">arnD</name>
    <name type="ordered locus">SeHA_C2540</name>
</gene>